<proteinExistence type="evidence at protein level"/>
<protein>
    <recommendedName>
        <fullName>Probable RNA polymerase II nuclear localization protein SLC7A6OS</fullName>
    </recommendedName>
    <alternativeName>
        <fullName>ADAMS proteinase-related protein</fullName>
    </alternativeName>
    <alternativeName>
        <fullName>Solute carrier family 7 member 6 opposite strand transcript</fullName>
    </alternativeName>
</protein>
<feature type="chain" id="PRO_0000289169" description="Probable RNA polymerase II nuclear localization protein SLC7A6OS">
    <location>
        <begin position="1"/>
        <end position="309"/>
    </location>
</feature>
<feature type="region of interest" description="Disordered" evidence="2">
    <location>
        <begin position="101"/>
        <end position="134"/>
    </location>
</feature>
<feature type="region of interest" description="Disordered" evidence="2">
    <location>
        <begin position="233"/>
        <end position="287"/>
    </location>
</feature>
<feature type="compositionally biased region" description="Low complexity" evidence="2">
    <location>
        <begin position="106"/>
        <end position="118"/>
    </location>
</feature>
<feature type="compositionally biased region" description="Acidic residues" evidence="2">
    <location>
        <begin position="233"/>
        <end position="245"/>
    </location>
</feature>
<feature type="compositionally biased region" description="Acidic residues" evidence="2">
    <location>
        <begin position="254"/>
        <end position="263"/>
    </location>
</feature>
<feature type="modified residue" description="Phosphoserine" evidence="9 10">
    <location>
        <position position="302"/>
    </location>
</feature>
<feature type="modified residue" description="Phosphoserine" evidence="8 9 10 11 12 13">
    <location>
        <position position="308"/>
    </location>
</feature>
<feature type="sequence variant" id="VAR_032591" description="In dbSNP:rs35800405.">
    <original>V</original>
    <variation>M</variation>
    <location>
        <position position="24"/>
    </location>
</feature>
<feature type="sequence variant" id="VAR_032592" description="In dbSNP:rs3803650." evidence="3 4">
    <original>G</original>
    <variation>D</variation>
    <location>
        <position position="45"/>
    </location>
</feature>
<feature type="sequence variant" id="VAR_085257" description="In EPM12; due to a nucleotide substitution that can result in aberrant splicing; patient cells contain both normally spliced transcripts and transcripts that retained intron 1; marked reduction of protein expression in patient cells; dbSNP:rs190706099." evidence="5">
    <original>Q</original>
    <variation>R</variation>
    <location>
        <position position="64"/>
    </location>
</feature>
<feature type="sequence variant" id="VAR_032593" description="In dbSNP:rs8063446.">
    <original>S</original>
    <variation>A</variation>
    <location>
        <position position="116"/>
    </location>
</feature>
<feature type="sequence variant" id="VAR_032594" description="In dbSNP:rs11548855.">
    <original>Y</original>
    <variation>C</variation>
    <location>
        <position position="220"/>
    </location>
</feature>
<feature type="sequence conflict" description="In Ref. 2; BAB14538." evidence="6" ref="2">
    <original>P</original>
    <variation>L</variation>
    <location>
        <position position="78"/>
    </location>
</feature>
<reference key="1">
    <citation type="journal article" date="2004" name="Yi Chuan">
        <title>Construction of Chang liver cDNA library and immunoscreening of ADAMS related genes.</title>
        <authorList>
            <person name="Lin J.T."/>
            <person name="Li Y.C."/>
            <person name="Zhang H.Y."/>
            <person name="Xu C.Q."/>
        </authorList>
    </citation>
    <scope>NUCLEOTIDE SEQUENCE [MRNA]</scope>
</reference>
<reference key="2">
    <citation type="journal article" date="2004" name="Nat. Genet.">
        <title>Complete sequencing and characterization of 21,243 full-length human cDNAs.</title>
        <authorList>
            <person name="Ota T."/>
            <person name="Suzuki Y."/>
            <person name="Nishikawa T."/>
            <person name="Otsuki T."/>
            <person name="Sugiyama T."/>
            <person name="Irie R."/>
            <person name="Wakamatsu A."/>
            <person name="Hayashi K."/>
            <person name="Sato H."/>
            <person name="Nagai K."/>
            <person name="Kimura K."/>
            <person name="Makita H."/>
            <person name="Sekine M."/>
            <person name="Obayashi M."/>
            <person name="Nishi T."/>
            <person name="Shibahara T."/>
            <person name="Tanaka T."/>
            <person name="Ishii S."/>
            <person name="Yamamoto J."/>
            <person name="Saito K."/>
            <person name="Kawai Y."/>
            <person name="Isono Y."/>
            <person name="Nakamura Y."/>
            <person name="Nagahari K."/>
            <person name="Murakami K."/>
            <person name="Yasuda T."/>
            <person name="Iwayanagi T."/>
            <person name="Wagatsuma M."/>
            <person name="Shiratori A."/>
            <person name="Sudo H."/>
            <person name="Hosoiri T."/>
            <person name="Kaku Y."/>
            <person name="Kodaira H."/>
            <person name="Kondo H."/>
            <person name="Sugawara M."/>
            <person name="Takahashi M."/>
            <person name="Kanda K."/>
            <person name="Yokoi T."/>
            <person name="Furuya T."/>
            <person name="Kikkawa E."/>
            <person name="Omura Y."/>
            <person name="Abe K."/>
            <person name="Kamihara K."/>
            <person name="Katsuta N."/>
            <person name="Sato K."/>
            <person name="Tanikawa M."/>
            <person name="Yamazaki M."/>
            <person name="Ninomiya K."/>
            <person name="Ishibashi T."/>
            <person name="Yamashita H."/>
            <person name="Murakawa K."/>
            <person name="Fujimori K."/>
            <person name="Tanai H."/>
            <person name="Kimata M."/>
            <person name="Watanabe M."/>
            <person name="Hiraoka S."/>
            <person name="Chiba Y."/>
            <person name="Ishida S."/>
            <person name="Ono Y."/>
            <person name="Takiguchi S."/>
            <person name="Watanabe S."/>
            <person name="Yosida M."/>
            <person name="Hotuta T."/>
            <person name="Kusano J."/>
            <person name="Kanehori K."/>
            <person name="Takahashi-Fujii A."/>
            <person name="Hara H."/>
            <person name="Tanase T.-O."/>
            <person name="Nomura Y."/>
            <person name="Togiya S."/>
            <person name="Komai F."/>
            <person name="Hara R."/>
            <person name="Takeuchi K."/>
            <person name="Arita M."/>
            <person name="Imose N."/>
            <person name="Musashino K."/>
            <person name="Yuuki H."/>
            <person name="Oshima A."/>
            <person name="Sasaki N."/>
            <person name="Aotsuka S."/>
            <person name="Yoshikawa Y."/>
            <person name="Matsunawa H."/>
            <person name="Ichihara T."/>
            <person name="Shiohata N."/>
            <person name="Sano S."/>
            <person name="Moriya S."/>
            <person name="Momiyama H."/>
            <person name="Satoh N."/>
            <person name="Takami S."/>
            <person name="Terashima Y."/>
            <person name="Suzuki O."/>
            <person name="Nakagawa S."/>
            <person name="Senoh A."/>
            <person name="Mizoguchi H."/>
            <person name="Goto Y."/>
            <person name="Shimizu F."/>
            <person name="Wakebe H."/>
            <person name="Hishigaki H."/>
            <person name="Watanabe T."/>
            <person name="Sugiyama A."/>
            <person name="Takemoto M."/>
            <person name="Kawakami B."/>
            <person name="Yamazaki M."/>
            <person name="Watanabe K."/>
            <person name="Kumagai A."/>
            <person name="Itakura S."/>
            <person name="Fukuzumi Y."/>
            <person name="Fujimori Y."/>
            <person name="Komiyama M."/>
            <person name="Tashiro H."/>
            <person name="Tanigami A."/>
            <person name="Fujiwara T."/>
            <person name="Ono T."/>
            <person name="Yamada K."/>
            <person name="Fujii Y."/>
            <person name="Ozaki K."/>
            <person name="Hirao M."/>
            <person name="Ohmori Y."/>
            <person name="Kawabata A."/>
            <person name="Hikiji T."/>
            <person name="Kobatake N."/>
            <person name="Inagaki H."/>
            <person name="Ikema Y."/>
            <person name="Okamoto S."/>
            <person name="Okitani R."/>
            <person name="Kawakami T."/>
            <person name="Noguchi S."/>
            <person name="Itoh T."/>
            <person name="Shigeta K."/>
            <person name="Senba T."/>
            <person name="Matsumura K."/>
            <person name="Nakajima Y."/>
            <person name="Mizuno T."/>
            <person name="Morinaga M."/>
            <person name="Sasaki M."/>
            <person name="Togashi T."/>
            <person name="Oyama M."/>
            <person name="Hata H."/>
            <person name="Watanabe M."/>
            <person name="Komatsu T."/>
            <person name="Mizushima-Sugano J."/>
            <person name="Satoh T."/>
            <person name="Shirai Y."/>
            <person name="Takahashi Y."/>
            <person name="Nakagawa K."/>
            <person name="Okumura K."/>
            <person name="Nagase T."/>
            <person name="Nomura N."/>
            <person name="Kikuchi H."/>
            <person name="Masuho Y."/>
            <person name="Yamashita R."/>
            <person name="Nakai K."/>
            <person name="Yada T."/>
            <person name="Nakamura Y."/>
            <person name="Ohara O."/>
            <person name="Isogai T."/>
            <person name="Sugano S."/>
        </authorList>
    </citation>
    <scope>NUCLEOTIDE SEQUENCE [LARGE SCALE MRNA]</scope>
    <scope>VARIANT ASP-45</scope>
    <source>
        <tissue>Ovary</tissue>
    </source>
</reference>
<reference key="3">
    <citation type="journal article" date="2004" name="Nature">
        <title>The sequence and analysis of duplication-rich human chromosome 16.</title>
        <authorList>
            <person name="Martin J."/>
            <person name="Han C."/>
            <person name="Gordon L.A."/>
            <person name="Terry A."/>
            <person name="Prabhakar S."/>
            <person name="She X."/>
            <person name="Xie G."/>
            <person name="Hellsten U."/>
            <person name="Chan Y.M."/>
            <person name="Altherr M."/>
            <person name="Couronne O."/>
            <person name="Aerts A."/>
            <person name="Bajorek E."/>
            <person name="Black S."/>
            <person name="Blumer H."/>
            <person name="Branscomb E."/>
            <person name="Brown N.C."/>
            <person name="Bruno W.J."/>
            <person name="Buckingham J.M."/>
            <person name="Callen D.F."/>
            <person name="Campbell C.S."/>
            <person name="Campbell M.L."/>
            <person name="Campbell E.W."/>
            <person name="Caoile C."/>
            <person name="Challacombe J.F."/>
            <person name="Chasteen L.A."/>
            <person name="Chertkov O."/>
            <person name="Chi H.C."/>
            <person name="Christensen M."/>
            <person name="Clark L.M."/>
            <person name="Cohn J.D."/>
            <person name="Denys M."/>
            <person name="Detter J.C."/>
            <person name="Dickson M."/>
            <person name="Dimitrijevic-Bussod M."/>
            <person name="Escobar J."/>
            <person name="Fawcett J.J."/>
            <person name="Flowers D."/>
            <person name="Fotopulos D."/>
            <person name="Glavina T."/>
            <person name="Gomez M."/>
            <person name="Gonzales E."/>
            <person name="Goodstein D."/>
            <person name="Goodwin L.A."/>
            <person name="Grady D.L."/>
            <person name="Grigoriev I."/>
            <person name="Groza M."/>
            <person name="Hammon N."/>
            <person name="Hawkins T."/>
            <person name="Haydu L."/>
            <person name="Hildebrand C.E."/>
            <person name="Huang W."/>
            <person name="Israni S."/>
            <person name="Jett J."/>
            <person name="Jewett P.B."/>
            <person name="Kadner K."/>
            <person name="Kimball H."/>
            <person name="Kobayashi A."/>
            <person name="Krawczyk M.-C."/>
            <person name="Leyba T."/>
            <person name="Longmire J.L."/>
            <person name="Lopez F."/>
            <person name="Lou Y."/>
            <person name="Lowry S."/>
            <person name="Ludeman T."/>
            <person name="Manohar C.F."/>
            <person name="Mark G.A."/>
            <person name="McMurray K.L."/>
            <person name="Meincke L.J."/>
            <person name="Morgan J."/>
            <person name="Moyzis R.K."/>
            <person name="Mundt M.O."/>
            <person name="Munk A.C."/>
            <person name="Nandkeshwar R.D."/>
            <person name="Pitluck S."/>
            <person name="Pollard M."/>
            <person name="Predki P."/>
            <person name="Parson-Quintana B."/>
            <person name="Ramirez L."/>
            <person name="Rash S."/>
            <person name="Retterer J."/>
            <person name="Ricke D.O."/>
            <person name="Robinson D.L."/>
            <person name="Rodriguez A."/>
            <person name="Salamov A."/>
            <person name="Saunders E.H."/>
            <person name="Scott D."/>
            <person name="Shough T."/>
            <person name="Stallings R.L."/>
            <person name="Stalvey M."/>
            <person name="Sutherland R.D."/>
            <person name="Tapia R."/>
            <person name="Tesmer J.G."/>
            <person name="Thayer N."/>
            <person name="Thompson L.S."/>
            <person name="Tice H."/>
            <person name="Torney D.C."/>
            <person name="Tran-Gyamfi M."/>
            <person name="Tsai M."/>
            <person name="Ulanovsky L.E."/>
            <person name="Ustaszewska A."/>
            <person name="Vo N."/>
            <person name="White P.S."/>
            <person name="Williams A.L."/>
            <person name="Wills P.L."/>
            <person name="Wu J.-R."/>
            <person name="Wu K."/>
            <person name="Yang J."/>
            <person name="DeJong P."/>
            <person name="Bruce D."/>
            <person name="Doggett N.A."/>
            <person name="Deaven L."/>
            <person name="Schmutz J."/>
            <person name="Grimwood J."/>
            <person name="Richardson P."/>
            <person name="Rokhsar D.S."/>
            <person name="Eichler E.E."/>
            <person name="Gilna P."/>
            <person name="Lucas S.M."/>
            <person name="Myers R.M."/>
            <person name="Rubin E.M."/>
            <person name="Pennacchio L.A."/>
        </authorList>
    </citation>
    <scope>NUCLEOTIDE SEQUENCE [LARGE SCALE GENOMIC DNA]</scope>
</reference>
<reference key="4">
    <citation type="journal article" date="2004" name="Genome Res.">
        <title>The status, quality, and expansion of the NIH full-length cDNA project: the Mammalian Gene Collection (MGC).</title>
        <authorList>
            <consortium name="The MGC Project Team"/>
        </authorList>
    </citation>
    <scope>NUCLEOTIDE SEQUENCE [LARGE SCALE MRNA]</scope>
    <scope>VARIANT ASP-45</scope>
    <source>
        <tissue>Adrenal cortex</tissue>
    </source>
</reference>
<reference key="5">
    <citation type="journal article" date="2006" name="Cell">
        <title>Global, in vivo, and site-specific phosphorylation dynamics in signaling networks.</title>
        <authorList>
            <person name="Olsen J.V."/>
            <person name="Blagoev B."/>
            <person name="Gnad F."/>
            <person name="Macek B."/>
            <person name="Kumar C."/>
            <person name="Mortensen P."/>
            <person name="Mann M."/>
        </authorList>
    </citation>
    <scope>PHOSPHORYLATION [LARGE SCALE ANALYSIS] AT SER-308</scope>
    <scope>IDENTIFICATION BY MASS SPECTROMETRY [LARGE SCALE ANALYSIS]</scope>
    <source>
        <tissue>Cervix carcinoma</tissue>
    </source>
</reference>
<reference key="6">
    <citation type="journal article" date="2008" name="Proc. Natl. Acad. Sci. U.S.A.">
        <title>A quantitative atlas of mitotic phosphorylation.</title>
        <authorList>
            <person name="Dephoure N."/>
            <person name="Zhou C."/>
            <person name="Villen J."/>
            <person name="Beausoleil S.A."/>
            <person name="Bakalarski C.E."/>
            <person name="Elledge S.J."/>
            <person name="Gygi S.P."/>
        </authorList>
    </citation>
    <scope>PHOSPHORYLATION [LARGE SCALE ANALYSIS] AT SER-302 AND SER-308</scope>
    <scope>IDENTIFICATION BY MASS SPECTROMETRY [LARGE SCALE ANALYSIS]</scope>
    <source>
        <tissue>Cervix carcinoma</tissue>
    </source>
</reference>
<reference key="7">
    <citation type="journal article" date="2009" name="Anal. Chem.">
        <title>Lys-N and trypsin cover complementary parts of the phosphoproteome in a refined SCX-based approach.</title>
        <authorList>
            <person name="Gauci S."/>
            <person name="Helbig A.O."/>
            <person name="Slijper M."/>
            <person name="Krijgsveld J."/>
            <person name="Heck A.J."/>
            <person name="Mohammed S."/>
        </authorList>
    </citation>
    <scope>IDENTIFICATION BY MASS SPECTROMETRY [LARGE SCALE ANALYSIS]</scope>
</reference>
<reference key="8">
    <citation type="journal article" date="2009" name="Sci. Signal.">
        <title>Quantitative phosphoproteomic analysis of T cell receptor signaling reveals system-wide modulation of protein-protein interactions.</title>
        <authorList>
            <person name="Mayya V."/>
            <person name="Lundgren D.H."/>
            <person name="Hwang S.-I."/>
            <person name="Rezaul K."/>
            <person name="Wu L."/>
            <person name="Eng J.K."/>
            <person name="Rodionov V."/>
            <person name="Han D.K."/>
        </authorList>
    </citation>
    <scope>PHOSPHORYLATION [LARGE SCALE ANALYSIS] AT SER-302 AND SER-308</scope>
    <scope>IDENTIFICATION BY MASS SPECTROMETRY [LARGE SCALE ANALYSIS]</scope>
    <source>
        <tissue>Leukemic T-cell</tissue>
    </source>
</reference>
<reference key="9">
    <citation type="journal article" date="2010" name="Sci. Signal.">
        <title>Quantitative phosphoproteomics reveals widespread full phosphorylation site occupancy during mitosis.</title>
        <authorList>
            <person name="Olsen J.V."/>
            <person name="Vermeulen M."/>
            <person name="Santamaria A."/>
            <person name="Kumar C."/>
            <person name="Miller M.L."/>
            <person name="Jensen L.J."/>
            <person name="Gnad F."/>
            <person name="Cox J."/>
            <person name="Jensen T.S."/>
            <person name="Nigg E.A."/>
            <person name="Brunak S."/>
            <person name="Mann M."/>
        </authorList>
    </citation>
    <scope>PHOSPHORYLATION [LARGE SCALE ANALYSIS] AT SER-308</scope>
    <scope>IDENTIFICATION BY MASS SPECTROMETRY [LARGE SCALE ANALYSIS]</scope>
    <source>
        <tissue>Cervix carcinoma</tissue>
    </source>
</reference>
<reference key="10">
    <citation type="journal article" date="2011" name="Mol. Cell">
        <title>Iwr1 directs RNA polymerase II nuclear import.</title>
        <authorList>
            <person name="Czeko E."/>
            <person name="Seizl M."/>
            <person name="Augsberger C."/>
            <person name="Mielke T."/>
            <person name="Cramer P."/>
        </authorList>
    </citation>
    <scope>TRANSFECTION IN YEAST</scope>
</reference>
<reference key="11">
    <citation type="journal article" date="2013" name="J. Proteome Res.">
        <title>Toward a comprehensive characterization of a human cancer cell phosphoproteome.</title>
        <authorList>
            <person name="Zhou H."/>
            <person name="Di Palma S."/>
            <person name="Preisinger C."/>
            <person name="Peng M."/>
            <person name="Polat A.N."/>
            <person name="Heck A.J."/>
            <person name="Mohammed S."/>
        </authorList>
    </citation>
    <scope>PHOSPHORYLATION [LARGE SCALE ANALYSIS] AT SER-308</scope>
    <scope>IDENTIFICATION BY MASS SPECTROMETRY [LARGE SCALE ANALYSIS]</scope>
    <source>
        <tissue>Cervix carcinoma</tissue>
        <tissue>Erythroleukemia</tissue>
    </source>
</reference>
<reference key="12">
    <citation type="journal article" date="2014" name="J. Proteomics">
        <title>An enzyme assisted RP-RPLC approach for in-depth analysis of human liver phosphoproteome.</title>
        <authorList>
            <person name="Bian Y."/>
            <person name="Song C."/>
            <person name="Cheng K."/>
            <person name="Dong M."/>
            <person name="Wang F."/>
            <person name="Huang J."/>
            <person name="Sun D."/>
            <person name="Wang L."/>
            <person name="Ye M."/>
            <person name="Zou H."/>
        </authorList>
    </citation>
    <scope>PHOSPHORYLATION [LARGE SCALE ANALYSIS] AT SER-308</scope>
    <scope>IDENTIFICATION BY MASS SPECTROMETRY [LARGE SCALE ANALYSIS]</scope>
    <source>
        <tissue>Liver</tissue>
    </source>
</reference>
<reference key="13">
    <citation type="journal article" date="2021" name="Ann. Neurol.">
        <title>Progressive Myoclonus Epilepsy Caused by a Homozygous Splicing Variant of SLC7A6OS.</title>
        <authorList>
            <person name="Mazzola L."/>
            <person name="Oliver K.L."/>
            <person name="Labalme A."/>
            <person name="Baykan B."/>
            <person name="Muona M."/>
            <person name="Joensuu T.H."/>
            <person name="Courage C."/>
            <person name="Chatron N."/>
            <person name="Borsani G."/>
            <person name="Alix E."/>
            <person name="Ramond F."/>
            <person name="Touraine R."/>
            <person name="Bahlo M."/>
            <person name="Bebek N."/>
            <person name="Berkovic S.F."/>
            <person name="Lehesjoki A.E."/>
            <person name="Lesca G."/>
        </authorList>
    </citation>
    <scope>INVOLVEMENT IN EPM12</scope>
    <scope>VARIANT EPM12 ARG-64</scope>
    <scope>CHARACTERIZATION OF VARIANT EPM12 ARG-64</scope>
</reference>
<evidence type="ECO:0000250" key="1"/>
<evidence type="ECO:0000256" key="2">
    <source>
        <dbReference type="SAM" id="MobiDB-lite"/>
    </source>
</evidence>
<evidence type="ECO:0000269" key="3">
    <source>
    </source>
</evidence>
<evidence type="ECO:0000269" key="4">
    <source>
    </source>
</evidence>
<evidence type="ECO:0000269" key="5">
    <source>
    </source>
</evidence>
<evidence type="ECO:0000305" key="6"/>
<evidence type="ECO:0000305" key="7">
    <source>
    </source>
</evidence>
<evidence type="ECO:0007744" key="8">
    <source>
    </source>
</evidence>
<evidence type="ECO:0007744" key="9">
    <source>
    </source>
</evidence>
<evidence type="ECO:0007744" key="10">
    <source>
    </source>
</evidence>
<evidence type="ECO:0007744" key="11">
    <source>
    </source>
</evidence>
<evidence type="ECO:0007744" key="12">
    <source>
    </source>
</evidence>
<evidence type="ECO:0007744" key="13">
    <source>
    </source>
</evidence>
<gene>
    <name type="primary">SLC7A6OS</name>
</gene>
<name>S7A6O_HUMAN</name>
<organism>
    <name type="scientific">Homo sapiens</name>
    <name type="common">Human</name>
    <dbReference type="NCBI Taxonomy" id="9606"/>
    <lineage>
        <taxon>Eukaryota</taxon>
        <taxon>Metazoa</taxon>
        <taxon>Chordata</taxon>
        <taxon>Craniata</taxon>
        <taxon>Vertebrata</taxon>
        <taxon>Euteleostomi</taxon>
        <taxon>Mammalia</taxon>
        <taxon>Eutheria</taxon>
        <taxon>Euarchontoglires</taxon>
        <taxon>Primates</taxon>
        <taxon>Haplorrhini</taxon>
        <taxon>Catarrhini</taxon>
        <taxon>Hominidae</taxon>
        <taxon>Homo</taxon>
    </lineage>
</organism>
<keyword id="KW-0963">Cytoplasm</keyword>
<keyword id="KW-0225">Disease variant</keyword>
<keyword id="KW-0887">Epilepsy</keyword>
<keyword id="KW-0523">Neurodegeneration</keyword>
<keyword id="KW-0539">Nucleus</keyword>
<keyword id="KW-0597">Phosphoprotein</keyword>
<keyword id="KW-0653">Protein transport</keyword>
<keyword id="KW-1267">Proteomics identification</keyword>
<keyword id="KW-1185">Reference proteome</keyword>
<keyword id="KW-0813">Transport</keyword>
<comment type="function">
    <text evidence="1">Directs RNA polymerase II nuclear import.</text>
</comment>
<comment type="subcellular location">
    <subcellularLocation>
        <location evidence="1">Cytoplasm</location>
    </subcellularLocation>
    <subcellularLocation>
        <location evidence="1">Nucleus</location>
    </subcellularLocation>
</comment>
<comment type="disease" evidence="5">
    <disease id="DI-06052">
        <name>Epilepsy, progressive myoclonic 12</name>
        <acronym>EPM12</acronym>
        <description>A form of progressive myoclonic epilepsy, a clinically and genetically heterogeneous group of disorders defined by the combination of action and reflex myoclonus, other types of epileptic seizures, and progressive neurodegeneration and neurocognitive impairment. EPM12 is an autosomal recessive form characterized by onset of tonic-clonic seizures and/or myoclonus in the second decade of life. Affected individuals develop cerebellar ataxia associated with progressive cerebral and cerebellar atrophy on brain imaging. Most patients lose ambulation and become wheelchair-bound. Additional more variable features include mild cognitive dysfunction or psychiatric manifestations, such as depression or anxiety.</description>
        <dbReference type="MIM" id="619191"/>
    </disease>
    <text>The disease may be caused by variants affecting the gene represented in this entry.</text>
</comment>
<comment type="miscellaneous">
    <text evidence="7">When transfected to S.cerevisiae cells, able to partially restore polymerase II mislocalization and cellular shape in IWR1 mutant cells.</text>
</comment>
<comment type="similarity">
    <text evidence="6">Belongs to the IWR1/SLC7A6OS family.</text>
</comment>
<comment type="sequence caution" evidence="6">
    <conflict type="frameshift">
        <sequence resource="EMBL-CDS" id="AAL79958"/>
    </conflict>
</comment>
<accession>Q96CW6</accession>
<accession>Q8TCZ3</accession>
<accession>Q9H8R8</accession>
<dbReference type="EMBL" id="AY078070">
    <property type="protein sequence ID" value="AAL79958.1"/>
    <property type="status" value="ALT_FRAME"/>
    <property type="molecule type" value="mRNA"/>
</dbReference>
<dbReference type="EMBL" id="AK023353">
    <property type="protein sequence ID" value="BAB14538.1"/>
    <property type="molecule type" value="mRNA"/>
</dbReference>
<dbReference type="EMBL" id="AC020978">
    <property type="status" value="NOT_ANNOTATED_CDS"/>
    <property type="molecule type" value="Genomic_DNA"/>
</dbReference>
<dbReference type="EMBL" id="BC013778">
    <property type="protein sequence ID" value="AAH13778.1"/>
    <property type="molecule type" value="mRNA"/>
</dbReference>
<dbReference type="CCDS" id="CCDS10865.1"/>
<dbReference type="RefSeq" id="NP_115554.2">
    <property type="nucleotide sequence ID" value="NM_032178.3"/>
</dbReference>
<dbReference type="BioGRID" id="123908">
    <property type="interactions" value="27"/>
</dbReference>
<dbReference type="FunCoup" id="Q96CW6">
    <property type="interactions" value="3346"/>
</dbReference>
<dbReference type="IntAct" id="Q96CW6">
    <property type="interactions" value="2"/>
</dbReference>
<dbReference type="STRING" id="9606.ENSP00000263997"/>
<dbReference type="GlyGen" id="Q96CW6">
    <property type="glycosylation" value="1 site, 1 O-linked glycan (1 site)"/>
</dbReference>
<dbReference type="iPTMnet" id="Q96CW6"/>
<dbReference type="PhosphoSitePlus" id="Q96CW6"/>
<dbReference type="SwissPalm" id="Q96CW6"/>
<dbReference type="BioMuta" id="SLC7A6OS"/>
<dbReference type="DMDM" id="296452893"/>
<dbReference type="jPOST" id="Q96CW6"/>
<dbReference type="MassIVE" id="Q96CW6"/>
<dbReference type="PaxDb" id="9606-ENSP00000263997"/>
<dbReference type="PeptideAtlas" id="Q96CW6"/>
<dbReference type="ProteomicsDB" id="76234"/>
<dbReference type="Pumba" id="Q96CW6"/>
<dbReference type="Antibodypedia" id="50485">
    <property type="antibodies" value="18 antibodies from 11 providers"/>
</dbReference>
<dbReference type="DNASU" id="84138"/>
<dbReference type="Ensembl" id="ENST00000263997.11">
    <property type="protein sequence ID" value="ENSP00000263997.5"/>
    <property type="gene ID" value="ENSG00000103061.13"/>
</dbReference>
<dbReference type="GeneID" id="84138"/>
<dbReference type="KEGG" id="hsa:84138"/>
<dbReference type="MANE-Select" id="ENST00000263997.11">
    <property type="protein sequence ID" value="ENSP00000263997.5"/>
    <property type="RefSeq nucleotide sequence ID" value="NM_032178.3"/>
    <property type="RefSeq protein sequence ID" value="NP_115554.2"/>
</dbReference>
<dbReference type="UCSC" id="uc002evw.3">
    <property type="organism name" value="human"/>
</dbReference>
<dbReference type="AGR" id="HGNC:25807"/>
<dbReference type="CTD" id="84138"/>
<dbReference type="DisGeNET" id="84138"/>
<dbReference type="GeneCards" id="SLC7A6OS"/>
<dbReference type="HGNC" id="HGNC:25807">
    <property type="gene designation" value="SLC7A6OS"/>
</dbReference>
<dbReference type="HPA" id="ENSG00000103061">
    <property type="expression patterns" value="Low tissue specificity"/>
</dbReference>
<dbReference type="MalaCards" id="SLC7A6OS"/>
<dbReference type="MIM" id="619191">
    <property type="type" value="phenotype"/>
</dbReference>
<dbReference type="MIM" id="619192">
    <property type="type" value="gene"/>
</dbReference>
<dbReference type="neXtProt" id="NX_Q96CW6"/>
<dbReference type="OpenTargets" id="ENSG00000103061"/>
<dbReference type="PharmGKB" id="PA142670912"/>
<dbReference type="VEuPathDB" id="HostDB:ENSG00000103061"/>
<dbReference type="eggNOG" id="KOG4852">
    <property type="taxonomic scope" value="Eukaryota"/>
</dbReference>
<dbReference type="GeneTree" id="ENSGT00390000015672"/>
<dbReference type="HOGENOM" id="CLU_059743_0_0_1"/>
<dbReference type="InParanoid" id="Q96CW6"/>
<dbReference type="OMA" id="QMWSKYP"/>
<dbReference type="OrthoDB" id="6255506at2759"/>
<dbReference type="PAN-GO" id="Q96CW6">
    <property type="GO annotations" value="1 GO annotation based on evolutionary models"/>
</dbReference>
<dbReference type="PhylomeDB" id="Q96CW6"/>
<dbReference type="TreeFam" id="TF324404"/>
<dbReference type="PathwayCommons" id="Q96CW6"/>
<dbReference type="SignaLink" id="Q96CW6"/>
<dbReference type="BioGRID-ORCS" id="84138">
    <property type="hits" value="695 hits in 1185 CRISPR screens"/>
</dbReference>
<dbReference type="ChiTaRS" id="SLC7A6OS">
    <property type="organism name" value="human"/>
</dbReference>
<dbReference type="GenomeRNAi" id="84138"/>
<dbReference type="Pharos" id="Q96CW6">
    <property type="development level" value="Tdark"/>
</dbReference>
<dbReference type="PRO" id="PR:Q96CW6"/>
<dbReference type="Proteomes" id="UP000005640">
    <property type="component" value="Chromosome 16"/>
</dbReference>
<dbReference type="RNAct" id="Q96CW6">
    <property type="molecule type" value="protein"/>
</dbReference>
<dbReference type="Bgee" id="ENSG00000103061">
    <property type="expression patterns" value="Expressed in pancreatic ductal cell and 155 other cell types or tissues"/>
</dbReference>
<dbReference type="ExpressionAtlas" id="Q96CW6">
    <property type="expression patterns" value="baseline and differential"/>
</dbReference>
<dbReference type="GO" id="GO:0005737">
    <property type="term" value="C:cytoplasm"/>
    <property type="evidence" value="ECO:0007669"/>
    <property type="project" value="UniProtKB-SubCell"/>
</dbReference>
<dbReference type="GO" id="GO:0005634">
    <property type="term" value="C:nucleus"/>
    <property type="evidence" value="ECO:0007669"/>
    <property type="project" value="UniProtKB-SubCell"/>
</dbReference>
<dbReference type="GO" id="GO:0032502">
    <property type="term" value="P:developmental process"/>
    <property type="evidence" value="ECO:0000318"/>
    <property type="project" value="GO_Central"/>
</dbReference>
<dbReference type="GO" id="GO:0002244">
    <property type="term" value="P:hematopoietic progenitor cell differentiation"/>
    <property type="evidence" value="ECO:0007669"/>
    <property type="project" value="Ensembl"/>
</dbReference>
<dbReference type="GO" id="GO:0015031">
    <property type="term" value="P:protein transport"/>
    <property type="evidence" value="ECO:0007669"/>
    <property type="project" value="UniProtKB-KW"/>
</dbReference>
<dbReference type="InterPro" id="IPR040218">
    <property type="entry name" value="SLC7A6OS"/>
</dbReference>
<dbReference type="InterPro" id="IPR013883">
    <property type="entry name" value="TF_Iwr1_dom"/>
</dbReference>
<dbReference type="PANTHER" id="PTHR31196">
    <property type="entry name" value="RNA POLYMERASE II NUCLEAR LOCALIZATION PROTEIN SLC7A6OS-RELATED"/>
    <property type="match status" value="1"/>
</dbReference>
<dbReference type="PANTHER" id="PTHR31196:SF2">
    <property type="entry name" value="RNA POLYMERASE II NUCLEAR LOCALIZATION PROTEIN SLC7A6OS-RELATED"/>
    <property type="match status" value="1"/>
</dbReference>
<dbReference type="Pfam" id="PF08574">
    <property type="entry name" value="Iwr1"/>
    <property type="match status" value="1"/>
</dbReference>
<sequence length="309" mass="35028">MEAARTAVLRVKRKRSAEPAEALVLACKRLRSDAVESAAQKTSEGLERAAENNVFHLVATVCSQEEPVQPLLREVLRPSRDSQQRVRRNLRASAREVRQEGRYRVLSSRRSLGTTSSGQESEYTPGNPEAAGNSGFQLLDLVHEEGEPEAASAGSCKTSDPDVILCNSVELIRERLTVSEDGPGVRRQEEQKHDDYVYDIYYLETATPGWIENILSVQPYSQEWELVNDDQEPEDIYDDEDDENSENNWRNEYPEEESSDGDEDSRGSADYNSLSEEERGSSRQRMWSKYPLDVQKEFGYDSPHDLDSD</sequence>